<gene>
    <name evidence="1" type="primary">atpD2</name>
    <name type="ordered locus">BMASAVP1_1289</name>
</gene>
<proteinExistence type="inferred from homology"/>
<dbReference type="EC" id="7.1.2.2" evidence="1"/>
<dbReference type="EMBL" id="CP000525">
    <property type="protein sequence ID" value="ABM48472.1"/>
    <property type="molecule type" value="Genomic_DNA"/>
</dbReference>
<dbReference type="SMR" id="A1UY34"/>
<dbReference type="KEGG" id="bmv:BMASAVP1_1289"/>
<dbReference type="HOGENOM" id="CLU_022398_0_2_4"/>
<dbReference type="GO" id="GO:0005886">
    <property type="term" value="C:plasma membrane"/>
    <property type="evidence" value="ECO:0007669"/>
    <property type="project" value="UniProtKB-SubCell"/>
</dbReference>
<dbReference type="GO" id="GO:0045259">
    <property type="term" value="C:proton-transporting ATP synthase complex"/>
    <property type="evidence" value="ECO:0007669"/>
    <property type="project" value="UniProtKB-KW"/>
</dbReference>
<dbReference type="GO" id="GO:0005524">
    <property type="term" value="F:ATP binding"/>
    <property type="evidence" value="ECO:0007669"/>
    <property type="project" value="UniProtKB-UniRule"/>
</dbReference>
<dbReference type="GO" id="GO:0016887">
    <property type="term" value="F:ATP hydrolysis activity"/>
    <property type="evidence" value="ECO:0007669"/>
    <property type="project" value="InterPro"/>
</dbReference>
<dbReference type="GO" id="GO:0046933">
    <property type="term" value="F:proton-transporting ATP synthase activity, rotational mechanism"/>
    <property type="evidence" value="ECO:0007669"/>
    <property type="project" value="UniProtKB-UniRule"/>
</dbReference>
<dbReference type="CDD" id="cd18110">
    <property type="entry name" value="ATP-synt_F1_beta_C"/>
    <property type="match status" value="1"/>
</dbReference>
<dbReference type="CDD" id="cd01133">
    <property type="entry name" value="F1-ATPase_beta_CD"/>
    <property type="match status" value="1"/>
</dbReference>
<dbReference type="Gene3D" id="2.40.10.170">
    <property type="match status" value="1"/>
</dbReference>
<dbReference type="Gene3D" id="1.10.1140.10">
    <property type="entry name" value="Bovine Mitochondrial F1-atpase, Atp Synthase Beta Chain, Chain D, domain 3"/>
    <property type="match status" value="1"/>
</dbReference>
<dbReference type="Gene3D" id="3.40.50.300">
    <property type="entry name" value="P-loop containing nucleotide triphosphate hydrolases"/>
    <property type="match status" value="1"/>
</dbReference>
<dbReference type="HAMAP" id="MF_01347">
    <property type="entry name" value="ATP_synth_beta_bact"/>
    <property type="match status" value="1"/>
</dbReference>
<dbReference type="InterPro" id="IPR003593">
    <property type="entry name" value="AAA+_ATPase"/>
</dbReference>
<dbReference type="InterPro" id="IPR055190">
    <property type="entry name" value="ATP-synt_VA_C"/>
</dbReference>
<dbReference type="InterPro" id="IPR005722">
    <property type="entry name" value="ATP_synth_F1_bsu"/>
</dbReference>
<dbReference type="InterPro" id="IPR020003">
    <property type="entry name" value="ATPase_a/bsu_AS"/>
</dbReference>
<dbReference type="InterPro" id="IPR050053">
    <property type="entry name" value="ATPase_alpha/beta_chains"/>
</dbReference>
<dbReference type="InterPro" id="IPR004100">
    <property type="entry name" value="ATPase_F1/V1/A1_a/bsu_N"/>
</dbReference>
<dbReference type="InterPro" id="IPR036121">
    <property type="entry name" value="ATPase_F1/V1/A1_a/bsu_N_sf"/>
</dbReference>
<dbReference type="InterPro" id="IPR000194">
    <property type="entry name" value="ATPase_F1/V1/A1_a/bsu_nucl-bd"/>
</dbReference>
<dbReference type="InterPro" id="IPR024034">
    <property type="entry name" value="ATPase_F1/V1_b/a_C"/>
</dbReference>
<dbReference type="InterPro" id="IPR027417">
    <property type="entry name" value="P-loop_NTPase"/>
</dbReference>
<dbReference type="NCBIfam" id="TIGR01039">
    <property type="entry name" value="atpD"/>
    <property type="match status" value="1"/>
</dbReference>
<dbReference type="PANTHER" id="PTHR15184">
    <property type="entry name" value="ATP SYNTHASE"/>
    <property type="match status" value="1"/>
</dbReference>
<dbReference type="PANTHER" id="PTHR15184:SF71">
    <property type="entry name" value="ATP SYNTHASE SUBUNIT BETA, MITOCHONDRIAL"/>
    <property type="match status" value="1"/>
</dbReference>
<dbReference type="Pfam" id="PF00006">
    <property type="entry name" value="ATP-synt_ab"/>
    <property type="match status" value="1"/>
</dbReference>
<dbReference type="Pfam" id="PF02874">
    <property type="entry name" value="ATP-synt_ab_N"/>
    <property type="match status" value="1"/>
</dbReference>
<dbReference type="Pfam" id="PF22919">
    <property type="entry name" value="ATP-synt_VA_C"/>
    <property type="match status" value="1"/>
</dbReference>
<dbReference type="SMART" id="SM00382">
    <property type="entry name" value="AAA"/>
    <property type="match status" value="1"/>
</dbReference>
<dbReference type="SUPFAM" id="SSF47917">
    <property type="entry name" value="C-terminal domain of alpha and beta subunits of F1 ATP synthase"/>
    <property type="match status" value="1"/>
</dbReference>
<dbReference type="SUPFAM" id="SSF50615">
    <property type="entry name" value="N-terminal domain of alpha and beta subunits of F1 ATP synthase"/>
    <property type="match status" value="1"/>
</dbReference>
<dbReference type="SUPFAM" id="SSF52540">
    <property type="entry name" value="P-loop containing nucleoside triphosphate hydrolases"/>
    <property type="match status" value="1"/>
</dbReference>
<dbReference type="PROSITE" id="PS00152">
    <property type="entry name" value="ATPASE_ALPHA_BETA"/>
    <property type="match status" value="1"/>
</dbReference>
<evidence type="ECO:0000255" key="1">
    <source>
        <dbReference type="HAMAP-Rule" id="MF_01347"/>
    </source>
</evidence>
<evidence type="ECO:0000256" key="2">
    <source>
        <dbReference type="SAM" id="MobiDB-lite"/>
    </source>
</evidence>
<reference key="1">
    <citation type="journal article" date="2010" name="Genome Biol. Evol.">
        <title>Continuing evolution of Burkholderia mallei through genome reduction and large-scale rearrangements.</title>
        <authorList>
            <person name="Losada L."/>
            <person name="Ronning C.M."/>
            <person name="DeShazer D."/>
            <person name="Woods D."/>
            <person name="Fedorova N."/>
            <person name="Kim H.S."/>
            <person name="Shabalina S.A."/>
            <person name="Pearson T.R."/>
            <person name="Brinkac L."/>
            <person name="Tan P."/>
            <person name="Nandi T."/>
            <person name="Crabtree J."/>
            <person name="Badger J."/>
            <person name="Beckstrom-Sternberg S."/>
            <person name="Saqib M."/>
            <person name="Schutzer S.E."/>
            <person name="Keim P."/>
            <person name="Nierman W.C."/>
        </authorList>
    </citation>
    <scope>NUCLEOTIDE SEQUENCE [LARGE SCALE GENOMIC DNA]</scope>
    <source>
        <strain>SAVP1</strain>
    </source>
</reference>
<protein>
    <recommendedName>
        <fullName evidence="1">ATP synthase subunit beta 2</fullName>
        <ecNumber evidence="1">7.1.2.2</ecNumber>
    </recommendedName>
    <alternativeName>
        <fullName evidence="1">ATP synthase F1 sector subunit beta 2</fullName>
    </alternativeName>
    <alternativeName>
        <fullName evidence="1">F-ATPase subunit beta 2</fullName>
    </alternativeName>
</protein>
<organism>
    <name type="scientific">Burkholderia mallei (strain SAVP1)</name>
    <dbReference type="NCBI Taxonomy" id="320388"/>
    <lineage>
        <taxon>Bacteria</taxon>
        <taxon>Pseudomonadati</taxon>
        <taxon>Pseudomonadota</taxon>
        <taxon>Betaproteobacteria</taxon>
        <taxon>Burkholderiales</taxon>
        <taxon>Burkholderiaceae</taxon>
        <taxon>Burkholderia</taxon>
        <taxon>pseudomallei group</taxon>
    </lineage>
</organism>
<accession>A1UY34</accession>
<name>ATPB2_BURMS</name>
<sequence>MADPQATNGTGAVCAERDASDVGDVSDVGDARDEGAGRVVAVRGAVVDVAFDGGALPALNEALTIPVDGAAPILAEVHAHLSDAAVRALALGPTGGLRRGAAVRATGGPIRVPVGDAVLGRLLSVTGAPGDDGAALAADVERRPIHRGAPLLAEQKSANALFATGIKVIDLLAPLAQGGKAAMFGGAGVGKTVFVMELIHAMVERYRGISVFAGIGERSREGHEMLLDMRGSGVLGRTVLVYGQMNEPPGARWRVPLTALAIAEYFRDERAQNVLLLMDNVFRFVQAGAEVSGLLGRLPSRVGYQPTLASEVAALQERIASVEGAAVTAIEAVYVPADDFTDPAVTAIAAHVDSMVVLSRAMAAEGMYPAIDPVASSSILLDPLVVGEAHVEVAIEVRRVIEHYRELQDVIALLGIDELGADDRRLVGRARRLQRFLTQPFAVTEAFTGQAGASVEIADTIAGCRAILRGDCDDWRESSLYMVGTLDDARRKEAAAREADARREAAAAASGAGPGTTSDPASGSAEPQGARHGR</sequence>
<keyword id="KW-0066">ATP synthesis</keyword>
<keyword id="KW-0067">ATP-binding</keyword>
<keyword id="KW-0997">Cell inner membrane</keyword>
<keyword id="KW-1003">Cell membrane</keyword>
<keyword id="KW-0139">CF(1)</keyword>
<keyword id="KW-0375">Hydrogen ion transport</keyword>
<keyword id="KW-0406">Ion transport</keyword>
<keyword id="KW-0472">Membrane</keyword>
<keyword id="KW-0547">Nucleotide-binding</keyword>
<keyword id="KW-1278">Translocase</keyword>
<keyword id="KW-0813">Transport</keyword>
<comment type="function">
    <text evidence="1">Produces ATP from ADP in the presence of a proton gradient across the membrane. The catalytic sites are hosted primarily by the beta subunits.</text>
</comment>
<comment type="catalytic activity">
    <reaction evidence="1">
        <text>ATP + H2O + 4 H(+)(in) = ADP + phosphate + 5 H(+)(out)</text>
        <dbReference type="Rhea" id="RHEA:57720"/>
        <dbReference type="ChEBI" id="CHEBI:15377"/>
        <dbReference type="ChEBI" id="CHEBI:15378"/>
        <dbReference type="ChEBI" id="CHEBI:30616"/>
        <dbReference type="ChEBI" id="CHEBI:43474"/>
        <dbReference type="ChEBI" id="CHEBI:456216"/>
        <dbReference type="EC" id="7.1.2.2"/>
    </reaction>
</comment>
<comment type="subunit">
    <text evidence="1">F-type ATPases have 2 components, CF(1) - the catalytic core - and CF(0) - the membrane proton channel. CF(1) has five subunits: alpha(3), beta(3), gamma(1), delta(1), epsilon(1). CF(0) has three main subunits: a(1), b(2) and c(9-12). The alpha and beta chains form an alternating ring which encloses part of the gamma chain. CF(1) is attached to CF(0) by a central stalk formed by the gamma and epsilon chains, while a peripheral stalk is formed by the delta and b chains.</text>
</comment>
<comment type="subcellular location">
    <subcellularLocation>
        <location evidence="1">Cell inner membrane</location>
        <topology evidence="1">Peripheral membrane protein</topology>
    </subcellularLocation>
</comment>
<comment type="similarity">
    <text evidence="1">Belongs to the ATPase alpha/beta chains family.</text>
</comment>
<feature type="chain" id="PRO_0000339491" description="ATP synthase subunit beta 2">
    <location>
        <begin position="1"/>
        <end position="534"/>
    </location>
</feature>
<feature type="region of interest" description="Disordered" evidence="2">
    <location>
        <begin position="494"/>
        <end position="534"/>
    </location>
</feature>
<feature type="compositionally biased region" description="Basic and acidic residues" evidence="2">
    <location>
        <begin position="494"/>
        <end position="505"/>
    </location>
</feature>
<feature type="binding site" evidence="1">
    <location>
        <begin position="185"/>
        <end position="192"/>
    </location>
    <ligand>
        <name>ATP</name>
        <dbReference type="ChEBI" id="CHEBI:30616"/>
    </ligand>
</feature>